<gene>
    <name type="ordered locus">NGR_a00150</name>
    <name type="ORF">y4bO</name>
</gene>
<reference key="1">
    <citation type="journal article" date="1997" name="Nature">
        <title>Molecular basis of symbiosis between Rhizobium and legumes.</title>
        <authorList>
            <person name="Freiberg C.A."/>
            <person name="Fellay R."/>
            <person name="Bairoch A."/>
            <person name="Broughton W.J."/>
            <person name="Rosenthal A."/>
            <person name="Perret X."/>
        </authorList>
    </citation>
    <scope>NUCLEOTIDE SEQUENCE [LARGE SCALE GENOMIC DNA]</scope>
    <source>
        <strain>NBRC 101917 / NGR234</strain>
    </source>
</reference>
<reference key="2">
    <citation type="journal article" date="2009" name="Appl. Environ. Microbiol.">
        <title>Rhizobium sp. strain NGR234 possesses a remarkable number of secretion systems.</title>
        <authorList>
            <person name="Schmeisser C."/>
            <person name="Liesegang H."/>
            <person name="Krysciak D."/>
            <person name="Bakkou N."/>
            <person name="Le Quere A."/>
            <person name="Wollherr A."/>
            <person name="Heinemeyer I."/>
            <person name="Morgenstern B."/>
            <person name="Pommerening-Roeser A."/>
            <person name="Flores M."/>
            <person name="Palacios R."/>
            <person name="Brenner S."/>
            <person name="Gottschalk G."/>
            <person name="Schmitz R.A."/>
            <person name="Broughton W.J."/>
            <person name="Perret X."/>
            <person name="Strittmatter A.W."/>
            <person name="Streit W.R."/>
        </authorList>
    </citation>
    <scope>NUCLEOTIDE SEQUENCE [LARGE SCALE GENOMIC DNA]</scope>
    <source>
        <strain>NBRC 101917 / NGR234</strain>
    </source>
</reference>
<geneLocation type="plasmid">
    <name>sym pNGR234a</name>
</geneLocation>
<keyword id="KW-0614">Plasmid</keyword>
<keyword id="KW-1185">Reference proteome</keyword>
<dbReference type="EMBL" id="U00090">
    <property type="protein sequence ID" value="AAB91630.1"/>
    <property type="molecule type" value="Genomic_DNA"/>
</dbReference>
<dbReference type="RefSeq" id="NP_443792.1">
    <property type="nucleotide sequence ID" value="NC_000914.2"/>
</dbReference>
<dbReference type="RefSeq" id="WP_010875057.1">
    <property type="nucleotide sequence ID" value="NC_000914.2"/>
</dbReference>
<dbReference type="KEGG" id="rhi:NGR_a00150"/>
<dbReference type="PATRIC" id="fig|394.7.peg.12"/>
<dbReference type="eggNOG" id="ENOG5033SH5">
    <property type="taxonomic scope" value="Bacteria"/>
</dbReference>
<dbReference type="HOGENOM" id="CLU_411528_0_0_5"/>
<dbReference type="OrthoDB" id="8362946at2"/>
<dbReference type="Proteomes" id="UP000001054">
    <property type="component" value="Plasmid pNGR234a"/>
</dbReference>
<accession>P55382</accession>
<feature type="chain" id="PRO_0000200810" description="Uncharacterized protein y4bO">
    <location>
        <begin position="1"/>
        <end position="606"/>
    </location>
</feature>
<organism>
    <name type="scientific">Sinorhizobium fredii (strain NBRC 101917 / NGR234)</name>
    <dbReference type="NCBI Taxonomy" id="394"/>
    <lineage>
        <taxon>Bacteria</taxon>
        <taxon>Pseudomonadati</taxon>
        <taxon>Pseudomonadota</taxon>
        <taxon>Alphaproteobacteria</taxon>
        <taxon>Hyphomicrobiales</taxon>
        <taxon>Rhizobiaceae</taxon>
        <taxon>Sinorhizobium/Ensifer group</taxon>
        <taxon>Sinorhizobium</taxon>
    </lineage>
</organism>
<protein>
    <recommendedName>
        <fullName>Uncharacterized protein y4bO</fullName>
    </recommendedName>
</protein>
<proteinExistence type="predicted"/>
<sequence>MSQSIQINRSAADAWSQLVKGGALDIDGRDKEFAGAICKMLDPTGTDLGDALAKATTDQLIQVFFRALQPFSEMYREILRFFTTAGAKYGRDQWRIGISEKHFELSDFEDFVRMWDGVPGEIDVPALGHEDFGIVWLAWEAYPQLGNVANKAAREPAELGIADVDRWLVDYRSGQINPLPLSVLSEQQDAGFRELAALVATVHEGLVAFSQNRAVLRSQFDWRTLKGSDAFSVNQLAFLDTDNWLGTAVAGLALAKGIAPESRSRIARVLQNAFEGLPTRKLKARVSLNDLDRFLSLPVWQKRHEIYAVWVFTELAAAANEHDLEIYHDQGRIAFEFRESRLATVTSARPPIDMITERRSPIANPVGAGRTANVQPDFGLWARDPGAERCALVVEVKHYKRTAKKSFSEVMTDYAAAHPNAPIVLVNYGPIGDILDCIPLSAKARCATVEHLTALNRTAREEFRDLVRKVIGWPVRAAPEIGGTTRAKSAVAVDVSRSMAPVLSDPRFSSALAAIAVAPHASEIFPIDRRVHTAISVEQAIERLRSIQGDINALEAPVTELLGTYDEVIVLTDRDGLNDLSALRSASEEFAAGSFFRVTVSRPEST</sequence>
<name>Y4BO_SINFN</name>